<name>RL24_CUTAK</name>
<reference key="1">
    <citation type="journal article" date="2004" name="Science">
        <title>The complete genome sequence of Propionibacterium acnes, a commensal of human skin.</title>
        <authorList>
            <person name="Brueggemann H."/>
            <person name="Henne A."/>
            <person name="Hoster F."/>
            <person name="Liesegang H."/>
            <person name="Wiezer A."/>
            <person name="Strittmatter A."/>
            <person name="Hujer S."/>
            <person name="Duerre P."/>
            <person name="Gottschalk G."/>
        </authorList>
    </citation>
    <scope>NUCLEOTIDE SEQUENCE [LARGE SCALE GENOMIC DNA]</scope>
    <source>
        <strain>DSM 16379 / KPA171202</strain>
    </source>
</reference>
<dbReference type="EMBL" id="AE017283">
    <property type="protein sequence ID" value="AAT83576.1"/>
    <property type="molecule type" value="Genomic_DNA"/>
</dbReference>
<dbReference type="RefSeq" id="WP_002514858.1">
    <property type="nucleotide sequence ID" value="NZ_CP025935.1"/>
</dbReference>
<dbReference type="PDB" id="8CRX">
    <property type="method" value="EM"/>
    <property type="resolution" value="2.78 A"/>
    <property type="chains" value="t=1-122"/>
</dbReference>
<dbReference type="PDB" id="8CVM">
    <property type="method" value="EM"/>
    <property type="resolution" value="2.66 A"/>
    <property type="chains" value="t=1-122"/>
</dbReference>
<dbReference type="PDB" id="9C4G">
    <property type="method" value="EM"/>
    <property type="resolution" value="2.53 A"/>
    <property type="chains" value="t=1-122"/>
</dbReference>
<dbReference type="PDBsum" id="8CRX"/>
<dbReference type="PDBsum" id="8CVM"/>
<dbReference type="PDBsum" id="9C4G"/>
<dbReference type="EMDB" id="EMD-45185"/>
<dbReference type="SMR" id="Q6A6N7"/>
<dbReference type="EnsemblBacteria" id="AAT83576">
    <property type="protein sequence ID" value="AAT83576"/>
    <property type="gene ID" value="PPA1851"/>
</dbReference>
<dbReference type="KEGG" id="pac:PPA1851"/>
<dbReference type="eggNOG" id="COG0198">
    <property type="taxonomic scope" value="Bacteria"/>
</dbReference>
<dbReference type="HOGENOM" id="CLU_093315_2_3_11"/>
<dbReference type="Proteomes" id="UP000000603">
    <property type="component" value="Chromosome"/>
</dbReference>
<dbReference type="GO" id="GO:1990904">
    <property type="term" value="C:ribonucleoprotein complex"/>
    <property type="evidence" value="ECO:0007669"/>
    <property type="project" value="UniProtKB-KW"/>
</dbReference>
<dbReference type="GO" id="GO:0005840">
    <property type="term" value="C:ribosome"/>
    <property type="evidence" value="ECO:0007669"/>
    <property type="project" value="UniProtKB-KW"/>
</dbReference>
<dbReference type="GO" id="GO:0019843">
    <property type="term" value="F:rRNA binding"/>
    <property type="evidence" value="ECO:0007669"/>
    <property type="project" value="UniProtKB-UniRule"/>
</dbReference>
<dbReference type="GO" id="GO:0003735">
    <property type="term" value="F:structural constituent of ribosome"/>
    <property type="evidence" value="ECO:0007669"/>
    <property type="project" value="InterPro"/>
</dbReference>
<dbReference type="GO" id="GO:0006412">
    <property type="term" value="P:translation"/>
    <property type="evidence" value="ECO:0007669"/>
    <property type="project" value="UniProtKB-UniRule"/>
</dbReference>
<dbReference type="CDD" id="cd06089">
    <property type="entry name" value="KOW_RPL26"/>
    <property type="match status" value="1"/>
</dbReference>
<dbReference type="Gene3D" id="2.30.30.30">
    <property type="match status" value="1"/>
</dbReference>
<dbReference type="HAMAP" id="MF_01326_B">
    <property type="entry name" value="Ribosomal_uL24_B"/>
    <property type="match status" value="1"/>
</dbReference>
<dbReference type="InterPro" id="IPR005824">
    <property type="entry name" value="KOW"/>
</dbReference>
<dbReference type="InterPro" id="IPR014722">
    <property type="entry name" value="Rib_uL2_dom2"/>
</dbReference>
<dbReference type="InterPro" id="IPR003256">
    <property type="entry name" value="Ribosomal_uL24"/>
</dbReference>
<dbReference type="InterPro" id="IPR005825">
    <property type="entry name" value="Ribosomal_uL24_CS"/>
</dbReference>
<dbReference type="InterPro" id="IPR041988">
    <property type="entry name" value="Ribosomal_uL24_KOW"/>
</dbReference>
<dbReference type="InterPro" id="IPR008991">
    <property type="entry name" value="Translation_prot_SH3-like_sf"/>
</dbReference>
<dbReference type="NCBIfam" id="TIGR01079">
    <property type="entry name" value="rplX_bact"/>
    <property type="match status" value="1"/>
</dbReference>
<dbReference type="PANTHER" id="PTHR12903">
    <property type="entry name" value="MITOCHONDRIAL RIBOSOMAL PROTEIN L24"/>
    <property type="match status" value="1"/>
</dbReference>
<dbReference type="Pfam" id="PF00467">
    <property type="entry name" value="KOW"/>
    <property type="match status" value="1"/>
</dbReference>
<dbReference type="Pfam" id="PF17136">
    <property type="entry name" value="ribosomal_L24"/>
    <property type="match status" value="1"/>
</dbReference>
<dbReference type="SMART" id="SM00739">
    <property type="entry name" value="KOW"/>
    <property type="match status" value="1"/>
</dbReference>
<dbReference type="SUPFAM" id="SSF50104">
    <property type="entry name" value="Translation proteins SH3-like domain"/>
    <property type="match status" value="1"/>
</dbReference>
<dbReference type="PROSITE" id="PS01108">
    <property type="entry name" value="RIBOSOMAL_L24"/>
    <property type="match status" value="1"/>
</dbReference>
<evidence type="ECO:0000255" key="1">
    <source>
        <dbReference type="HAMAP-Rule" id="MF_01326"/>
    </source>
</evidence>
<evidence type="ECO:0000256" key="2">
    <source>
        <dbReference type="SAM" id="MobiDB-lite"/>
    </source>
</evidence>
<evidence type="ECO:0000305" key="3"/>
<evidence type="ECO:0007829" key="4">
    <source>
        <dbReference type="PDB" id="8CVM"/>
    </source>
</evidence>
<feature type="chain" id="PRO_0000241639" description="Large ribosomal subunit protein uL24">
    <location>
        <begin position="1"/>
        <end position="122"/>
    </location>
</feature>
<feature type="region of interest" description="Disordered" evidence="2">
    <location>
        <begin position="43"/>
        <end position="64"/>
    </location>
</feature>
<feature type="strand" evidence="4">
    <location>
        <begin position="11"/>
        <end position="14"/>
    </location>
</feature>
<feature type="turn" evidence="4">
    <location>
        <begin position="18"/>
        <end position="21"/>
    </location>
</feature>
<feature type="strand" evidence="4">
    <location>
        <begin position="23"/>
        <end position="30"/>
    </location>
</feature>
<feature type="turn" evidence="4">
    <location>
        <begin position="31"/>
        <end position="34"/>
    </location>
</feature>
<feature type="strand" evidence="4">
    <location>
        <begin position="35"/>
        <end position="38"/>
    </location>
</feature>
<feature type="turn" evidence="4">
    <location>
        <begin position="39"/>
        <end position="41"/>
    </location>
</feature>
<feature type="strand" evidence="4">
    <location>
        <begin position="42"/>
        <end position="45"/>
    </location>
</feature>
<feature type="strand" evidence="4">
    <location>
        <begin position="65"/>
        <end position="67"/>
    </location>
</feature>
<feature type="helix" evidence="4">
    <location>
        <begin position="72"/>
        <end position="74"/>
    </location>
</feature>
<feature type="strand" evidence="4">
    <location>
        <begin position="75"/>
        <end position="87"/>
    </location>
</feature>
<feature type="strand" evidence="4">
    <location>
        <begin position="90"/>
        <end position="100"/>
    </location>
</feature>
<feature type="strand" evidence="4">
    <location>
        <begin position="106"/>
        <end position="116"/>
    </location>
</feature>
<accession>Q6A6N7</accession>
<protein>
    <recommendedName>
        <fullName evidence="1">Large ribosomal subunit protein uL24</fullName>
    </recommendedName>
    <alternativeName>
        <fullName evidence="3">50S ribosomal protein L24</fullName>
    </alternativeName>
</protein>
<comment type="function">
    <text evidence="1">One of two assembly initiator proteins, it binds directly to the 5'-end of the 23S rRNA, where it nucleates assembly of the 50S subunit.</text>
</comment>
<comment type="function">
    <text evidence="1">One of the proteins that surrounds the polypeptide exit tunnel on the outside of the subunit.</text>
</comment>
<comment type="subunit">
    <text evidence="1">Part of the 50S ribosomal subunit.</text>
</comment>
<comment type="similarity">
    <text evidence="1">Belongs to the universal ribosomal protein uL24 family.</text>
</comment>
<sequence>MKSLKIKKGDRVKVIAGNDKGAIGEVLSVDPARERVVVEGVNIRKHHRRDMPTPQGGTTKGGIISSEAPIHVSNVQLVTKIDGKDVVTRVGYRRVDVTKRRPDGSEYAAQRSVRYLKKEEAK</sequence>
<gene>
    <name evidence="1" type="primary">rplX</name>
    <name type="ordered locus">PPA1851</name>
</gene>
<proteinExistence type="evidence at protein level"/>
<organism>
    <name type="scientific">Cutibacterium acnes (strain DSM 16379 / KPA171202)</name>
    <name type="common">Propionibacterium acnes</name>
    <dbReference type="NCBI Taxonomy" id="267747"/>
    <lineage>
        <taxon>Bacteria</taxon>
        <taxon>Bacillati</taxon>
        <taxon>Actinomycetota</taxon>
        <taxon>Actinomycetes</taxon>
        <taxon>Propionibacteriales</taxon>
        <taxon>Propionibacteriaceae</taxon>
        <taxon>Cutibacterium</taxon>
    </lineage>
</organism>
<keyword id="KW-0002">3D-structure</keyword>
<keyword id="KW-0687">Ribonucleoprotein</keyword>
<keyword id="KW-0689">Ribosomal protein</keyword>
<keyword id="KW-0694">RNA-binding</keyword>
<keyword id="KW-0699">rRNA-binding</keyword>